<feature type="chain" id="PRO_0000049309" description="Homeobox protein SIX6">
    <location>
        <begin position="1"/>
        <end position="246"/>
    </location>
</feature>
<feature type="DNA-binding region" description="Homeobox" evidence="1">
    <location>
        <begin position="126"/>
        <end position="186"/>
    </location>
</feature>
<feature type="region of interest" description="Disordered" evidence="2">
    <location>
        <begin position="195"/>
        <end position="246"/>
    </location>
</feature>
<feature type="compositionally biased region" description="Polar residues" evidence="2">
    <location>
        <begin position="195"/>
        <end position="204"/>
    </location>
</feature>
<feature type="compositionally biased region" description="Low complexity" evidence="2">
    <location>
        <begin position="217"/>
        <end position="246"/>
    </location>
</feature>
<protein>
    <recommendedName>
        <fullName>Homeobox protein SIX6</fullName>
    </recommendedName>
    <alternativeName>
        <fullName>Optic homeobox 2</fullName>
    </alternativeName>
    <alternativeName>
        <fullName>Sine oculis homeobox homolog 6</fullName>
    </alternativeName>
    <alternativeName>
        <fullName>Six9 protein</fullName>
    </alternativeName>
</protein>
<accession>O93307</accession>
<organism>
    <name type="scientific">Gallus gallus</name>
    <name type="common">Chicken</name>
    <dbReference type="NCBI Taxonomy" id="9031"/>
    <lineage>
        <taxon>Eukaryota</taxon>
        <taxon>Metazoa</taxon>
        <taxon>Chordata</taxon>
        <taxon>Craniata</taxon>
        <taxon>Vertebrata</taxon>
        <taxon>Euteleostomi</taxon>
        <taxon>Archelosauria</taxon>
        <taxon>Archosauria</taxon>
        <taxon>Dinosauria</taxon>
        <taxon>Saurischia</taxon>
        <taxon>Theropoda</taxon>
        <taxon>Coelurosauria</taxon>
        <taxon>Aves</taxon>
        <taxon>Neognathae</taxon>
        <taxon>Galloanserae</taxon>
        <taxon>Galliformes</taxon>
        <taxon>Phasianidae</taxon>
        <taxon>Phasianinae</taxon>
        <taxon>Gallus</taxon>
    </lineage>
</organism>
<dbReference type="EMBL" id="AF050131">
    <property type="protein sequence ID" value="AAC33851.1"/>
    <property type="molecule type" value="mRNA"/>
</dbReference>
<dbReference type="EMBL" id="AJ011786">
    <property type="protein sequence ID" value="CAA09774.1"/>
    <property type="molecule type" value="mRNA"/>
</dbReference>
<dbReference type="RefSeq" id="NP_001376294.1">
    <property type="nucleotide sequence ID" value="NM_001389365.2"/>
</dbReference>
<dbReference type="RefSeq" id="NP_990325.1">
    <property type="nucleotide sequence ID" value="NM_204994.1"/>
</dbReference>
<dbReference type="RefSeq" id="XP_015142771.1">
    <property type="nucleotide sequence ID" value="XM_015287285.1"/>
</dbReference>
<dbReference type="BMRB" id="O93307"/>
<dbReference type="SMR" id="O93307"/>
<dbReference type="FunCoup" id="O93307">
    <property type="interactions" value="8"/>
</dbReference>
<dbReference type="STRING" id="9031.ENSGALP00000036574"/>
<dbReference type="PaxDb" id="9031-ENSGALP00000036574"/>
<dbReference type="Ensembl" id="ENSGALT00000037367">
    <property type="protein sequence ID" value="ENSGALP00000036574"/>
    <property type="gene ID" value="ENSGALG00000020359"/>
</dbReference>
<dbReference type="Ensembl" id="ENSGALT00010047980.1">
    <property type="protein sequence ID" value="ENSGALP00010028324.1"/>
    <property type="gene ID" value="ENSGALG00010019860.1"/>
</dbReference>
<dbReference type="GeneID" id="395843"/>
<dbReference type="KEGG" id="gga:395843"/>
<dbReference type="VEuPathDB" id="HostDB:geneid_395843"/>
<dbReference type="eggNOG" id="KOG0775">
    <property type="taxonomic scope" value="Eukaryota"/>
</dbReference>
<dbReference type="GeneTree" id="ENSGT00940000160091"/>
<dbReference type="HOGENOM" id="CLU_046914_0_1_1"/>
<dbReference type="InParanoid" id="O93307"/>
<dbReference type="OMA" id="RSQQCAF"/>
<dbReference type="OrthoDB" id="3501850at2759"/>
<dbReference type="PhylomeDB" id="O93307"/>
<dbReference type="PRO" id="PR:O93307"/>
<dbReference type="Proteomes" id="UP000000539">
    <property type="component" value="Chromosome 5"/>
</dbReference>
<dbReference type="GO" id="GO:0005634">
    <property type="term" value="C:nucleus"/>
    <property type="evidence" value="ECO:0007669"/>
    <property type="project" value="UniProtKB-SubCell"/>
</dbReference>
<dbReference type="GO" id="GO:0000978">
    <property type="term" value="F:RNA polymerase II cis-regulatory region sequence-specific DNA binding"/>
    <property type="evidence" value="ECO:0007669"/>
    <property type="project" value="Ensembl"/>
</dbReference>
<dbReference type="CDD" id="cd00086">
    <property type="entry name" value="homeodomain"/>
    <property type="match status" value="1"/>
</dbReference>
<dbReference type="FunFam" id="1.10.10.60:FF:000046">
    <property type="entry name" value="SIX homeobox 3"/>
    <property type="match status" value="1"/>
</dbReference>
<dbReference type="Gene3D" id="1.10.10.60">
    <property type="entry name" value="Homeodomain-like"/>
    <property type="match status" value="1"/>
</dbReference>
<dbReference type="InterPro" id="IPR001356">
    <property type="entry name" value="HD"/>
</dbReference>
<dbReference type="InterPro" id="IPR009057">
    <property type="entry name" value="Homeodomain-like_sf"/>
</dbReference>
<dbReference type="InterPro" id="IPR031701">
    <property type="entry name" value="SIX1_SD"/>
</dbReference>
<dbReference type="PANTHER" id="PTHR10390">
    <property type="entry name" value="HOMEOBOX PROTEIN SIX"/>
    <property type="match status" value="1"/>
</dbReference>
<dbReference type="PANTHER" id="PTHR10390:SF12">
    <property type="entry name" value="HOMEOBOX PROTEIN SIX6"/>
    <property type="match status" value="1"/>
</dbReference>
<dbReference type="Pfam" id="PF00046">
    <property type="entry name" value="Homeodomain"/>
    <property type="match status" value="1"/>
</dbReference>
<dbReference type="Pfam" id="PF16878">
    <property type="entry name" value="SIX1_SD"/>
    <property type="match status" value="1"/>
</dbReference>
<dbReference type="SMART" id="SM00389">
    <property type="entry name" value="HOX"/>
    <property type="match status" value="1"/>
</dbReference>
<dbReference type="SUPFAM" id="SSF46689">
    <property type="entry name" value="Homeodomain-like"/>
    <property type="match status" value="1"/>
</dbReference>
<dbReference type="PROSITE" id="PS50071">
    <property type="entry name" value="HOMEOBOX_2"/>
    <property type="match status" value="1"/>
</dbReference>
<name>SIX6_CHICK</name>
<proteinExistence type="evidence at transcript level"/>
<comment type="function">
    <text evidence="5">May be involved in eye development.</text>
</comment>
<comment type="subcellular location">
    <subcellularLocation>
        <location evidence="1">Nucleus</location>
    </subcellularLocation>
</comment>
<comment type="tissue specificity">
    <text evidence="3 4">In the developing embryo, expressed in the anterior head-fold, the anterior neural plate and optic vesicle. At later stages expression is maintained in the eye, while brain expression becomes limited. Not expressed in the lens placode.</text>
</comment>
<comment type="developmental stage">
    <text evidence="3 4">Expression is first detected in the prechordal mesoderm of stage 4 gastrulas.</text>
</comment>
<comment type="similarity">
    <text evidence="6">Belongs to the SIX/Sine oculis homeobox family.</text>
</comment>
<sequence length="246" mass="27637">MFQLPILNFSPQQVAGVCETLEESGDIERLGRFLWSLPVAPAACEALNKNESVLRARAIVAFHTGNYRELYHILENHKFTKESHGKLQALWLEAHYQEAEKLRGRPLGPVDKYRVRKKFPLPRTIWDGEQKTHCFKERTRHLLREWYLQDPYPNPSKKRELAQATGLTPTQVGNWFKNRRQRDRAAAAKNRLQQQVLAQGSGRSLQAEEESGGEAGGAASSPAVSLSSKAATSAISITSSDSECDI</sequence>
<evidence type="ECO:0000255" key="1">
    <source>
        <dbReference type="PROSITE-ProRule" id="PRU00108"/>
    </source>
</evidence>
<evidence type="ECO:0000256" key="2">
    <source>
        <dbReference type="SAM" id="MobiDB-lite"/>
    </source>
</evidence>
<evidence type="ECO:0000269" key="3">
    <source>
    </source>
</evidence>
<evidence type="ECO:0000269" key="4">
    <source>
    </source>
</evidence>
<evidence type="ECO:0000303" key="5">
    <source>
    </source>
</evidence>
<evidence type="ECO:0000305" key="6"/>
<keyword id="KW-0217">Developmental protein</keyword>
<keyword id="KW-0238">DNA-binding</keyword>
<keyword id="KW-0371">Homeobox</keyword>
<keyword id="KW-0539">Nucleus</keyword>
<keyword id="KW-1185">Reference proteome</keyword>
<gene>
    <name type="primary">SIX6</name>
    <name type="synonym">OPTX2</name>
    <name type="synonym">SIX9</name>
</gene>
<reference evidence="6" key="1">
    <citation type="journal article" date="1998" name="Proc. Natl. Acad. Sci. U.S.A.">
        <title>The optx2 homeobox gene is expressed in early precursors of the eye and activates retina-specific genes.</title>
        <authorList>
            <person name="Toy J."/>
            <person name="Yang J.-M."/>
            <person name="Leppert G.S."/>
            <person name="Sundin O.H."/>
        </authorList>
    </citation>
    <scope>NUCLEOTIDE SEQUENCE [MRNA]</scope>
    <scope>TISSUE SPECIFICITY</scope>
    <scope>DEVELOPMENTAL STAGE</scope>
    <source>
        <tissue>Embryonic retina</tissue>
    </source>
</reference>
<reference evidence="6" key="2">
    <citation type="journal article" date="1999" name="Mech. Dev.">
        <title>Six9 (Optx2), a new member of the Six gene family of transcription factors, is expressed at early stages of vertebrate ocular and pituitary development.</title>
        <authorList>
            <person name="Lopez-Rios J."/>
            <person name="Gallardo E."/>
            <person name="Rodriguez de Cordoba S."/>
            <person name="Bovolenta P."/>
        </authorList>
    </citation>
    <scope>NUCLEOTIDE SEQUENCE [MRNA]</scope>
    <scope>TISSUE SPECIFICITY</scope>
    <scope>DEVELOPMENTAL STAGE</scope>
</reference>